<keyword id="KW-1185">Reference proteome</keyword>
<keyword id="KW-0687">Ribonucleoprotein</keyword>
<keyword id="KW-0689">Ribosomal protein</keyword>
<keyword id="KW-0694">RNA-binding</keyword>
<keyword id="KW-0699">rRNA-binding</keyword>
<protein>
    <recommendedName>
        <fullName evidence="1">Large ribosomal subunit protein uL4</fullName>
    </recommendedName>
    <alternativeName>
        <fullName evidence="3">50S ribosomal protein L4</fullName>
    </alternativeName>
</protein>
<gene>
    <name evidence="1" type="primary">rplD</name>
    <name type="ordered locus">MMAR_1032</name>
</gene>
<feature type="chain" id="PRO_1000142158" description="Large ribosomal subunit protein uL4">
    <location>
        <begin position="1"/>
        <end position="224"/>
    </location>
</feature>
<feature type="region of interest" description="Disordered" evidence="2">
    <location>
        <begin position="52"/>
        <end position="109"/>
    </location>
</feature>
<dbReference type="EMBL" id="CP000854">
    <property type="protein sequence ID" value="ACC39490.1"/>
    <property type="molecule type" value="Genomic_DNA"/>
</dbReference>
<dbReference type="RefSeq" id="WP_012392939.1">
    <property type="nucleotide sequence ID" value="NC_010612.1"/>
</dbReference>
<dbReference type="SMR" id="B2HSN2"/>
<dbReference type="STRING" id="216594.MMAR_1032"/>
<dbReference type="GeneID" id="34342336"/>
<dbReference type="KEGG" id="mmi:MMAR_1032"/>
<dbReference type="eggNOG" id="COG0088">
    <property type="taxonomic scope" value="Bacteria"/>
</dbReference>
<dbReference type="HOGENOM" id="CLU_041575_5_0_11"/>
<dbReference type="OrthoDB" id="9803201at2"/>
<dbReference type="Proteomes" id="UP000001190">
    <property type="component" value="Chromosome"/>
</dbReference>
<dbReference type="GO" id="GO:1990904">
    <property type="term" value="C:ribonucleoprotein complex"/>
    <property type="evidence" value="ECO:0007669"/>
    <property type="project" value="UniProtKB-KW"/>
</dbReference>
<dbReference type="GO" id="GO:0005840">
    <property type="term" value="C:ribosome"/>
    <property type="evidence" value="ECO:0007669"/>
    <property type="project" value="UniProtKB-KW"/>
</dbReference>
<dbReference type="GO" id="GO:0019843">
    <property type="term" value="F:rRNA binding"/>
    <property type="evidence" value="ECO:0007669"/>
    <property type="project" value="UniProtKB-UniRule"/>
</dbReference>
<dbReference type="GO" id="GO:0003735">
    <property type="term" value="F:structural constituent of ribosome"/>
    <property type="evidence" value="ECO:0007669"/>
    <property type="project" value="InterPro"/>
</dbReference>
<dbReference type="GO" id="GO:0006412">
    <property type="term" value="P:translation"/>
    <property type="evidence" value="ECO:0007669"/>
    <property type="project" value="UniProtKB-UniRule"/>
</dbReference>
<dbReference type="FunFam" id="3.40.1370.10:FF:000004">
    <property type="entry name" value="50S ribosomal protein L4"/>
    <property type="match status" value="1"/>
</dbReference>
<dbReference type="Gene3D" id="3.40.1370.10">
    <property type="match status" value="1"/>
</dbReference>
<dbReference type="HAMAP" id="MF_01328_B">
    <property type="entry name" value="Ribosomal_uL4_B"/>
    <property type="match status" value="1"/>
</dbReference>
<dbReference type="InterPro" id="IPR002136">
    <property type="entry name" value="Ribosomal_uL4"/>
</dbReference>
<dbReference type="InterPro" id="IPR013005">
    <property type="entry name" value="Ribosomal_uL4-like"/>
</dbReference>
<dbReference type="InterPro" id="IPR023574">
    <property type="entry name" value="Ribosomal_uL4_dom_sf"/>
</dbReference>
<dbReference type="NCBIfam" id="TIGR03953">
    <property type="entry name" value="rplD_bact"/>
    <property type="match status" value="1"/>
</dbReference>
<dbReference type="PANTHER" id="PTHR10746">
    <property type="entry name" value="50S RIBOSOMAL PROTEIN L4"/>
    <property type="match status" value="1"/>
</dbReference>
<dbReference type="PANTHER" id="PTHR10746:SF6">
    <property type="entry name" value="LARGE RIBOSOMAL SUBUNIT PROTEIN UL4M"/>
    <property type="match status" value="1"/>
</dbReference>
<dbReference type="Pfam" id="PF00573">
    <property type="entry name" value="Ribosomal_L4"/>
    <property type="match status" value="1"/>
</dbReference>
<dbReference type="SUPFAM" id="SSF52166">
    <property type="entry name" value="Ribosomal protein L4"/>
    <property type="match status" value="1"/>
</dbReference>
<accession>B2HSN2</accession>
<name>RL4_MYCMM</name>
<proteinExistence type="inferred from homology"/>
<sequence>MAAQNQSAQKDLEIQVKTPDGKVDGSVALPAELFDVPANIALMHQVVTAQRAAARQGTHSTKTRGDVSGGGRKPYRQKGTGRARQGSTRAPQFTGGGVVHGPKPRDYSQRTPKKMIAAALRGALSDRARNGRIHAVTELVAGQTPSTKSAKTFLATITDRKQVLVVIGRDDQTGVKSVRNLPGVHILSPDQLNTYDVLRADDVVFSVEALNAYIAANTSEEVSA</sequence>
<comment type="function">
    <text evidence="1">One of the primary rRNA binding proteins, this protein initially binds near the 5'-end of the 23S rRNA. It is important during the early stages of 50S assembly. It makes multiple contacts with different domains of the 23S rRNA in the assembled 50S subunit and ribosome.</text>
</comment>
<comment type="function">
    <text evidence="1">Forms part of the polypeptide exit tunnel.</text>
</comment>
<comment type="subunit">
    <text evidence="1">Part of the 50S ribosomal subunit.</text>
</comment>
<comment type="similarity">
    <text evidence="1">Belongs to the universal ribosomal protein uL4 family.</text>
</comment>
<organism>
    <name type="scientific">Mycobacterium marinum (strain ATCC BAA-535 / M)</name>
    <dbReference type="NCBI Taxonomy" id="216594"/>
    <lineage>
        <taxon>Bacteria</taxon>
        <taxon>Bacillati</taxon>
        <taxon>Actinomycetota</taxon>
        <taxon>Actinomycetes</taxon>
        <taxon>Mycobacteriales</taxon>
        <taxon>Mycobacteriaceae</taxon>
        <taxon>Mycobacterium</taxon>
        <taxon>Mycobacterium ulcerans group</taxon>
    </lineage>
</organism>
<evidence type="ECO:0000255" key="1">
    <source>
        <dbReference type="HAMAP-Rule" id="MF_01328"/>
    </source>
</evidence>
<evidence type="ECO:0000256" key="2">
    <source>
        <dbReference type="SAM" id="MobiDB-lite"/>
    </source>
</evidence>
<evidence type="ECO:0000305" key="3"/>
<reference key="1">
    <citation type="journal article" date="2008" name="Genome Res.">
        <title>Insights from the complete genome sequence of Mycobacterium marinum on the evolution of Mycobacterium tuberculosis.</title>
        <authorList>
            <person name="Stinear T.P."/>
            <person name="Seemann T."/>
            <person name="Harrison P.F."/>
            <person name="Jenkin G.A."/>
            <person name="Davies J.K."/>
            <person name="Johnson P.D."/>
            <person name="Abdellah Z."/>
            <person name="Arrowsmith C."/>
            <person name="Chillingworth T."/>
            <person name="Churcher C."/>
            <person name="Clarke K."/>
            <person name="Cronin A."/>
            <person name="Davis P."/>
            <person name="Goodhead I."/>
            <person name="Holroyd N."/>
            <person name="Jagels K."/>
            <person name="Lord A."/>
            <person name="Moule S."/>
            <person name="Mungall K."/>
            <person name="Norbertczak H."/>
            <person name="Quail M.A."/>
            <person name="Rabbinowitsch E."/>
            <person name="Walker D."/>
            <person name="White B."/>
            <person name="Whitehead S."/>
            <person name="Small P.L."/>
            <person name="Brosch R."/>
            <person name="Ramakrishnan L."/>
            <person name="Fischbach M.A."/>
            <person name="Parkhill J."/>
            <person name="Cole S.T."/>
        </authorList>
    </citation>
    <scope>NUCLEOTIDE SEQUENCE [LARGE SCALE GENOMIC DNA]</scope>
    <source>
        <strain>ATCC BAA-535 / M</strain>
    </source>
</reference>